<sequence length="748" mass="82374">MAESKCPAHQHVLKANVGGAGTSNQDWWPDRLKLNILRQNNPVSNPLGEEFDYAAAFNSLDYFALKKDIQDLMTDSQDWWPADFGHYGGLFIRMAWHSAGTYRVADGRGGGGGGQQRFAPLNSWPDNVGLDKARRLLWPIKQKYGNKISWADLLLLTGNVALESMGFKTFGFSGGRADTWEVDESANWGGETTWLGNDVRYSGGKADHKDIHNRDLDKPLAAAHMGLIYVNPEGPDGNPDPIAAAKDIRTTFGRMAMNDEETVALIAGGHTFGKTHGAGPADKLGPEPEAADMAQQGLGWTNSFKSGKGPDTTTSGLEVTWTKTPTKWSNQFLEYLFRYDWELTKSPAGAHQWVAKNAEAFIPDAFDPSKKRKPMMLTTDLSLRYDPIYEKISRRFLEHPDQFADAFARAWFKLLHRDLGPRALYIGPEVPAEVLPWQDPVPAVDHPLISNEDASALKQRILASGVKPSSLISTAWASASTFRGSDKRGGANGARIRLSPQREWAVNNQPWLRETLSVLEAIQKQFNTSQSGGKKVSIADLIVLAGVAAVEKAARDAGYAVTVPFTPGRTDASQEQTDVQSFSDMEPIADGFRNYGSSTSRVRAEEWLIDKAQLLTLSAPELAVLIGGLRVLNTNYDGSAHGVFTQRPGKLTNDFFVNLLDMNTAWKSIGGVDLYEGTDRKTGAKKWTATRNDLVFGSNAELRAIAEVYGSSDGQEKFVKDFVAAWDKVMNLDRFDLKKKQSTSSHRL</sequence>
<proteinExistence type="evidence at transcript level"/>
<accession>Q8NJN2</accession>
<protein>
    <recommendedName>
        <fullName evidence="1">Catalase-peroxidase</fullName>
        <shortName evidence="1">CP</shortName>
        <ecNumber evidence="1">1.11.1.21</ecNumber>
    </recommendedName>
    <alternativeName>
        <fullName evidence="1">Peroxidase/catalase</fullName>
    </alternativeName>
</protein>
<comment type="function">
    <text evidence="1 3">Bifunctional enzyme with both catalase and broad-spectrum peroxidase activity (By similarity). Plays a crucial role in oxidative stress response during infection (PubMed:23859079). Acts as an antigen and elicits antibody response in P.marneffei-infected AIDS patients, healthy people working in mycological laboratory, and healthy people in an endemic area (PubMed:23859079).</text>
</comment>
<comment type="catalytic activity">
    <reaction evidence="1">
        <text>H2O2 + AH2 = A + 2 H2O</text>
        <dbReference type="Rhea" id="RHEA:30275"/>
        <dbReference type="ChEBI" id="CHEBI:13193"/>
        <dbReference type="ChEBI" id="CHEBI:15377"/>
        <dbReference type="ChEBI" id="CHEBI:16240"/>
        <dbReference type="ChEBI" id="CHEBI:17499"/>
        <dbReference type="EC" id="1.11.1.21"/>
    </reaction>
</comment>
<comment type="catalytic activity">
    <reaction evidence="1">
        <text>2 H2O2 = O2 + 2 H2O</text>
        <dbReference type="Rhea" id="RHEA:20309"/>
        <dbReference type="ChEBI" id="CHEBI:15377"/>
        <dbReference type="ChEBI" id="CHEBI:15379"/>
        <dbReference type="ChEBI" id="CHEBI:16240"/>
        <dbReference type="EC" id="1.11.1.21"/>
    </reaction>
</comment>
<comment type="cofactor">
    <cofactor evidence="1">
        <name>heme b</name>
        <dbReference type="ChEBI" id="CHEBI:60344"/>
    </cofactor>
    <text evidence="1">Binds 1 heme b (iron(II)-protoporphyrin IX) group per monomer.</text>
</comment>
<comment type="subunit">
    <text evidence="1">Homodimer or homotetramer.</text>
</comment>
<comment type="subcellular location">
    <subcellularLocation>
        <location evidence="1">Cytoplasm</location>
    </subcellularLocation>
</comment>
<comment type="induction">
    <text evidence="2 3">Induced by temperature shift to 37 degrees Celsius, the condition whereby the pathogenic yeast phase is formed (PubMed:16178368, PubMed:23859079). Expression is also induced in oxidative stress response and during infection in the murine macrophage (PubMed:23859079).</text>
</comment>
<comment type="PTM">
    <text evidence="1">Formation of the three residue Trp-Tyr-Met cross-link is important for the catalase, but not the peroxidase activity of the enzyme.</text>
</comment>
<comment type="disruption phenotype">
    <text evidence="3">Reduces the fungal tolerance to hydrogen peroxide but not to heat stress.</text>
</comment>
<comment type="similarity">
    <text evidence="1">Belongs to the peroxidase family. Peroxidase/catalase subfamily.</text>
</comment>
<gene>
    <name evidence="1" type="primary">katG</name>
    <name evidence="4" type="synonym">cpeA</name>
</gene>
<reference key="1">
    <citation type="journal article" date="2005" name="Med. Mycol.">
        <title>Isolation and characterization of a catalase-peroxidase gene from the pathogenic fungus, Penicillium marneffei.</title>
        <authorList>
            <person name="Pongpom P."/>
            <person name="Cooper C.R. Jr."/>
            <person name="Vanittanakom N."/>
        </authorList>
    </citation>
    <scope>NUCLEOTIDE SEQUENCE [MRNA]</scope>
    <scope>INDUCTION</scope>
</reference>
<reference key="2">
    <citation type="journal article" date="2013" name="Med. Mycol.">
        <title>Antioxidative and immunogenic properties of catalase-peroxidase protein in Penicillium marneffei.</title>
        <authorList>
            <person name="Pongpom M."/>
            <person name="Sawatdeechaikul P."/>
            <person name="Kummasook A."/>
            <person name="Khanthawong S."/>
            <person name="Vanittanakom N."/>
        </authorList>
    </citation>
    <scope>FUNCTION</scope>
    <scope>INDUCTION</scope>
    <scope>DISRUPTION PHENOTYPE</scope>
    <scope>IDENTIFICATION AS AN ANTIGEN</scope>
</reference>
<evidence type="ECO:0000255" key="1">
    <source>
        <dbReference type="HAMAP-Rule" id="MF_03108"/>
    </source>
</evidence>
<evidence type="ECO:0000269" key="2">
    <source>
    </source>
</evidence>
<evidence type="ECO:0000269" key="3">
    <source>
    </source>
</evidence>
<evidence type="ECO:0000303" key="4">
    <source>
    </source>
</evidence>
<dbReference type="EC" id="1.11.1.21" evidence="1"/>
<dbReference type="EMBL" id="AF537129">
    <property type="protein sequence ID" value="AAN04057.1"/>
    <property type="molecule type" value="mRNA"/>
</dbReference>
<dbReference type="SMR" id="Q8NJN2"/>
<dbReference type="PeroxiBase" id="2182">
    <property type="entry name" value="PmCP01"/>
</dbReference>
<dbReference type="VEuPathDB" id="FungiDB:PMAA_101750"/>
<dbReference type="GO" id="GO:0005829">
    <property type="term" value="C:cytosol"/>
    <property type="evidence" value="ECO:0007669"/>
    <property type="project" value="TreeGrafter"/>
</dbReference>
<dbReference type="GO" id="GO:0004096">
    <property type="term" value="F:catalase activity"/>
    <property type="evidence" value="ECO:0007669"/>
    <property type="project" value="UniProtKB-UniRule"/>
</dbReference>
<dbReference type="GO" id="GO:0020037">
    <property type="term" value="F:heme binding"/>
    <property type="evidence" value="ECO:0007669"/>
    <property type="project" value="InterPro"/>
</dbReference>
<dbReference type="GO" id="GO:0046872">
    <property type="term" value="F:metal ion binding"/>
    <property type="evidence" value="ECO:0007669"/>
    <property type="project" value="UniProtKB-KW"/>
</dbReference>
<dbReference type="GO" id="GO:0070301">
    <property type="term" value="P:cellular response to hydrogen peroxide"/>
    <property type="evidence" value="ECO:0007669"/>
    <property type="project" value="TreeGrafter"/>
</dbReference>
<dbReference type="GO" id="GO:0042744">
    <property type="term" value="P:hydrogen peroxide catabolic process"/>
    <property type="evidence" value="ECO:0007669"/>
    <property type="project" value="UniProtKB-KW"/>
</dbReference>
<dbReference type="CDD" id="cd00649">
    <property type="entry name" value="catalase_peroxidase_1"/>
    <property type="match status" value="1"/>
</dbReference>
<dbReference type="CDD" id="cd08200">
    <property type="entry name" value="catalase_peroxidase_2"/>
    <property type="match status" value="1"/>
</dbReference>
<dbReference type="FunFam" id="1.10.420.10:FF:000002">
    <property type="entry name" value="Catalase-peroxidase"/>
    <property type="match status" value="1"/>
</dbReference>
<dbReference type="FunFam" id="1.10.420.10:FF:000004">
    <property type="entry name" value="Catalase-peroxidase"/>
    <property type="match status" value="1"/>
</dbReference>
<dbReference type="FunFam" id="1.10.520.10:FF:000002">
    <property type="entry name" value="Catalase-peroxidase"/>
    <property type="match status" value="1"/>
</dbReference>
<dbReference type="Gene3D" id="1.10.520.10">
    <property type="match status" value="2"/>
</dbReference>
<dbReference type="Gene3D" id="1.10.420.10">
    <property type="entry name" value="Peroxidase, domain 2"/>
    <property type="match status" value="2"/>
</dbReference>
<dbReference type="HAMAP" id="MF_01961">
    <property type="entry name" value="Catal_peroxid"/>
    <property type="match status" value="1"/>
</dbReference>
<dbReference type="InterPro" id="IPR000763">
    <property type="entry name" value="Catalase_peroxidase"/>
</dbReference>
<dbReference type="InterPro" id="IPR002016">
    <property type="entry name" value="Haem_peroxidase"/>
</dbReference>
<dbReference type="InterPro" id="IPR010255">
    <property type="entry name" value="Haem_peroxidase_sf"/>
</dbReference>
<dbReference type="InterPro" id="IPR019794">
    <property type="entry name" value="Peroxidases_AS"/>
</dbReference>
<dbReference type="InterPro" id="IPR019793">
    <property type="entry name" value="Peroxidases_heam-ligand_BS"/>
</dbReference>
<dbReference type="NCBIfam" id="TIGR00198">
    <property type="entry name" value="cat_per_HPI"/>
    <property type="match status" value="1"/>
</dbReference>
<dbReference type="NCBIfam" id="NF011635">
    <property type="entry name" value="PRK15061.1"/>
    <property type="match status" value="1"/>
</dbReference>
<dbReference type="PANTHER" id="PTHR30555:SF0">
    <property type="entry name" value="CATALASE-PEROXIDASE"/>
    <property type="match status" value="1"/>
</dbReference>
<dbReference type="PANTHER" id="PTHR30555">
    <property type="entry name" value="HYDROPEROXIDASE I, BIFUNCTIONAL CATALASE-PEROXIDASE"/>
    <property type="match status" value="1"/>
</dbReference>
<dbReference type="Pfam" id="PF00141">
    <property type="entry name" value="peroxidase"/>
    <property type="match status" value="2"/>
</dbReference>
<dbReference type="PRINTS" id="PR00460">
    <property type="entry name" value="BPEROXIDASE"/>
</dbReference>
<dbReference type="PRINTS" id="PR00458">
    <property type="entry name" value="PEROXIDASE"/>
</dbReference>
<dbReference type="SUPFAM" id="SSF48113">
    <property type="entry name" value="Heme-dependent peroxidases"/>
    <property type="match status" value="2"/>
</dbReference>
<dbReference type="PROSITE" id="PS00435">
    <property type="entry name" value="PEROXIDASE_1"/>
    <property type="match status" value="1"/>
</dbReference>
<dbReference type="PROSITE" id="PS00436">
    <property type="entry name" value="PEROXIDASE_2"/>
    <property type="match status" value="1"/>
</dbReference>
<dbReference type="PROSITE" id="PS50873">
    <property type="entry name" value="PEROXIDASE_4"/>
    <property type="match status" value="1"/>
</dbReference>
<feature type="chain" id="PRO_0000354108" description="Catalase-peroxidase">
    <location>
        <begin position="1"/>
        <end position="748"/>
    </location>
</feature>
<feature type="active site" description="Proton acceptor" evidence="1">
    <location>
        <position position="97"/>
    </location>
</feature>
<feature type="binding site" description="axial binding residue" evidence="1">
    <location>
        <position position="270"/>
    </location>
    <ligand>
        <name>heme b</name>
        <dbReference type="ChEBI" id="CHEBI:60344"/>
    </ligand>
    <ligandPart>
        <name>Fe</name>
        <dbReference type="ChEBI" id="CHEBI:18248"/>
    </ligandPart>
</feature>
<feature type="site" description="Transition state stabilizer" evidence="1">
    <location>
        <position position="93"/>
    </location>
</feature>
<feature type="cross-link" description="Tryptophyl-tyrosyl-methioninium (Trp-Tyr) (with M-255)" evidence="1">
    <location>
        <begin position="96"/>
        <end position="229"/>
    </location>
</feature>
<feature type="cross-link" description="Tryptophyl-tyrosyl-methioninium (Tyr-Met) (with W-96)" evidence="1">
    <location>
        <begin position="229"/>
        <end position="255"/>
    </location>
</feature>
<organism>
    <name type="scientific">Talaromyces marneffei</name>
    <name type="common">Penicillium marneffei</name>
    <dbReference type="NCBI Taxonomy" id="37727"/>
    <lineage>
        <taxon>Eukaryota</taxon>
        <taxon>Fungi</taxon>
        <taxon>Dikarya</taxon>
        <taxon>Ascomycota</taxon>
        <taxon>Pezizomycotina</taxon>
        <taxon>Eurotiomycetes</taxon>
        <taxon>Eurotiomycetidae</taxon>
        <taxon>Eurotiales</taxon>
        <taxon>Trichocomaceae</taxon>
        <taxon>Talaromyces</taxon>
        <taxon>Talaromyces sect. Talaromyces</taxon>
    </lineage>
</organism>
<name>KATG_TALMA</name>
<keyword id="KW-0963">Cytoplasm</keyword>
<keyword id="KW-0349">Heme</keyword>
<keyword id="KW-0376">Hydrogen peroxide</keyword>
<keyword id="KW-0408">Iron</keyword>
<keyword id="KW-0479">Metal-binding</keyword>
<keyword id="KW-0560">Oxidoreductase</keyword>
<keyword id="KW-0575">Peroxidase</keyword>